<dbReference type="EC" id="6.3.5.7" evidence="1"/>
<dbReference type="EMBL" id="CP000812">
    <property type="protein sequence ID" value="ABV33410.1"/>
    <property type="molecule type" value="Genomic_DNA"/>
</dbReference>
<dbReference type="SMR" id="A8F5H6"/>
<dbReference type="STRING" id="416591.Tlet_0844"/>
<dbReference type="KEGG" id="tle:Tlet_0844"/>
<dbReference type="eggNOG" id="COG0154">
    <property type="taxonomic scope" value="Bacteria"/>
</dbReference>
<dbReference type="HOGENOM" id="CLU_009600_0_3_0"/>
<dbReference type="OrthoDB" id="9811471at2"/>
<dbReference type="Proteomes" id="UP000002016">
    <property type="component" value="Chromosome"/>
</dbReference>
<dbReference type="GO" id="GO:0030956">
    <property type="term" value="C:glutamyl-tRNA(Gln) amidotransferase complex"/>
    <property type="evidence" value="ECO:0007669"/>
    <property type="project" value="InterPro"/>
</dbReference>
<dbReference type="GO" id="GO:0005524">
    <property type="term" value="F:ATP binding"/>
    <property type="evidence" value="ECO:0007669"/>
    <property type="project" value="UniProtKB-KW"/>
</dbReference>
<dbReference type="GO" id="GO:0050567">
    <property type="term" value="F:glutaminyl-tRNA synthase (glutamine-hydrolyzing) activity"/>
    <property type="evidence" value="ECO:0007669"/>
    <property type="project" value="UniProtKB-UniRule"/>
</dbReference>
<dbReference type="GO" id="GO:0006412">
    <property type="term" value="P:translation"/>
    <property type="evidence" value="ECO:0007669"/>
    <property type="project" value="UniProtKB-UniRule"/>
</dbReference>
<dbReference type="Gene3D" id="3.90.1300.10">
    <property type="entry name" value="Amidase signature (AS) domain"/>
    <property type="match status" value="1"/>
</dbReference>
<dbReference type="HAMAP" id="MF_00120">
    <property type="entry name" value="GatA"/>
    <property type="match status" value="1"/>
</dbReference>
<dbReference type="InterPro" id="IPR000120">
    <property type="entry name" value="Amidase"/>
</dbReference>
<dbReference type="InterPro" id="IPR020556">
    <property type="entry name" value="Amidase_CS"/>
</dbReference>
<dbReference type="InterPro" id="IPR023631">
    <property type="entry name" value="Amidase_dom"/>
</dbReference>
<dbReference type="InterPro" id="IPR036928">
    <property type="entry name" value="AS_sf"/>
</dbReference>
<dbReference type="InterPro" id="IPR004412">
    <property type="entry name" value="GatA"/>
</dbReference>
<dbReference type="NCBIfam" id="TIGR00132">
    <property type="entry name" value="gatA"/>
    <property type="match status" value="1"/>
</dbReference>
<dbReference type="PANTHER" id="PTHR11895:SF151">
    <property type="entry name" value="GLUTAMYL-TRNA(GLN) AMIDOTRANSFERASE SUBUNIT A"/>
    <property type="match status" value="1"/>
</dbReference>
<dbReference type="PANTHER" id="PTHR11895">
    <property type="entry name" value="TRANSAMIDASE"/>
    <property type="match status" value="1"/>
</dbReference>
<dbReference type="Pfam" id="PF01425">
    <property type="entry name" value="Amidase"/>
    <property type="match status" value="1"/>
</dbReference>
<dbReference type="SUPFAM" id="SSF75304">
    <property type="entry name" value="Amidase signature (AS) enzymes"/>
    <property type="match status" value="1"/>
</dbReference>
<dbReference type="PROSITE" id="PS00571">
    <property type="entry name" value="AMIDASES"/>
    <property type="match status" value="1"/>
</dbReference>
<accession>A8F5H6</accession>
<protein>
    <recommendedName>
        <fullName evidence="1">Glutamyl-tRNA(Gln) amidotransferase subunit A</fullName>
        <shortName evidence="1">Glu-ADT subunit A</shortName>
        <ecNumber evidence="1">6.3.5.7</ecNumber>
    </recommendedName>
</protein>
<name>GATA_PSELT</name>
<feature type="chain" id="PRO_1000076147" description="Glutamyl-tRNA(Gln) amidotransferase subunit A">
    <location>
        <begin position="1"/>
        <end position="467"/>
    </location>
</feature>
<feature type="active site" description="Charge relay system" evidence="1">
    <location>
        <position position="57"/>
    </location>
</feature>
<feature type="active site" description="Charge relay system" evidence="1">
    <location>
        <position position="132"/>
    </location>
</feature>
<feature type="active site" description="Acyl-ester intermediate" evidence="1">
    <location>
        <position position="156"/>
    </location>
</feature>
<keyword id="KW-0067">ATP-binding</keyword>
<keyword id="KW-0436">Ligase</keyword>
<keyword id="KW-0547">Nucleotide-binding</keyword>
<keyword id="KW-0648">Protein biosynthesis</keyword>
<keyword id="KW-1185">Reference proteome</keyword>
<comment type="function">
    <text evidence="1">Allows the formation of correctly charged Gln-tRNA(Gln) through the transamidation of misacylated Glu-tRNA(Gln) in organisms which lack glutaminyl-tRNA synthetase. The reaction takes place in the presence of glutamine and ATP through an activated gamma-phospho-Glu-tRNA(Gln).</text>
</comment>
<comment type="catalytic activity">
    <reaction evidence="1">
        <text>L-glutamyl-tRNA(Gln) + L-glutamine + ATP + H2O = L-glutaminyl-tRNA(Gln) + L-glutamate + ADP + phosphate + H(+)</text>
        <dbReference type="Rhea" id="RHEA:17521"/>
        <dbReference type="Rhea" id="RHEA-COMP:9681"/>
        <dbReference type="Rhea" id="RHEA-COMP:9684"/>
        <dbReference type="ChEBI" id="CHEBI:15377"/>
        <dbReference type="ChEBI" id="CHEBI:15378"/>
        <dbReference type="ChEBI" id="CHEBI:29985"/>
        <dbReference type="ChEBI" id="CHEBI:30616"/>
        <dbReference type="ChEBI" id="CHEBI:43474"/>
        <dbReference type="ChEBI" id="CHEBI:58359"/>
        <dbReference type="ChEBI" id="CHEBI:78520"/>
        <dbReference type="ChEBI" id="CHEBI:78521"/>
        <dbReference type="ChEBI" id="CHEBI:456216"/>
        <dbReference type="EC" id="6.3.5.7"/>
    </reaction>
</comment>
<comment type="subunit">
    <text evidence="1">Heterotrimer of A, B and C subunits.</text>
</comment>
<comment type="similarity">
    <text evidence="1">Belongs to the amidase family. GatA subfamily.</text>
</comment>
<sequence length="467" mass="51152">MFEKMTIEDCLSKESDLINLSLERIKCIDSAVKSFITVVDKQEELEGPYKGIPIAIKDNITTKNIRTTCGSKMLENYTPPYDATCVKRLKNYGFAIVGKTNLDEFAMGSSTERSAFFVTRNPWDLDYVAGGSSGGSAAAVASGEVVAALGSDTGGSVRQPAAFCGIVGFKPTYGLVSRYGLVAFASSLDQIGPMTKSVRDAALIMEVIAGKDPMDSTTVSKKLDFLTHIEDGISGMKFAVPEEVYKYEQLDREVSDRFEEALKTAEKLGAKVSRVKIPTIKYAVATYYIIAPAEASSNLARYDGVKYGLRIEEPGLMDTYMKTRNVGFGEEVRRRIFLGTFTLSAAYYEAYFGKAQKVRKLLSDDLNRVLADFDAILTPTSPSPAFKIGSVADPLTYYLMDIFTIPANLSGLPAISVPFGFAKNLPVGLQIMGRRFDDPKVLAIARAFEKYSPYNINGRIPLPVVRI</sequence>
<evidence type="ECO:0000255" key="1">
    <source>
        <dbReference type="HAMAP-Rule" id="MF_00120"/>
    </source>
</evidence>
<gene>
    <name evidence="1" type="primary">gatA</name>
    <name type="ordered locus">Tlet_0844</name>
</gene>
<organism>
    <name type="scientific">Pseudothermotoga lettingae (strain ATCC BAA-301 / DSM 14385 / NBRC 107922 / TMO)</name>
    <name type="common">Thermotoga lettingae</name>
    <dbReference type="NCBI Taxonomy" id="416591"/>
    <lineage>
        <taxon>Bacteria</taxon>
        <taxon>Thermotogati</taxon>
        <taxon>Thermotogota</taxon>
        <taxon>Thermotogae</taxon>
        <taxon>Thermotogales</taxon>
        <taxon>Thermotogaceae</taxon>
        <taxon>Pseudothermotoga</taxon>
    </lineage>
</organism>
<reference key="1">
    <citation type="submission" date="2007-08" db="EMBL/GenBank/DDBJ databases">
        <title>Complete sequence of Thermotoga lettingae TMO.</title>
        <authorList>
            <consortium name="US DOE Joint Genome Institute"/>
            <person name="Copeland A."/>
            <person name="Lucas S."/>
            <person name="Lapidus A."/>
            <person name="Barry K."/>
            <person name="Glavina del Rio T."/>
            <person name="Dalin E."/>
            <person name="Tice H."/>
            <person name="Pitluck S."/>
            <person name="Foster B."/>
            <person name="Bruce D."/>
            <person name="Schmutz J."/>
            <person name="Larimer F."/>
            <person name="Land M."/>
            <person name="Hauser L."/>
            <person name="Kyrpides N."/>
            <person name="Mikhailova N."/>
            <person name="Nelson K."/>
            <person name="Gogarten J.P."/>
            <person name="Noll K."/>
            <person name="Richardson P."/>
        </authorList>
    </citation>
    <scope>NUCLEOTIDE SEQUENCE [LARGE SCALE GENOMIC DNA]</scope>
    <source>
        <strain>ATCC BAA-301 / DSM 14385 / NBRC 107922 / TMO</strain>
    </source>
</reference>
<proteinExistence type="inferred from homology"/>